<sequence length="267" mass="28782">MNALLSNPFKEGLRKGDTQIGLWLSSTTSYMAEIAATSGYDWLLIDGEHAPNTVQDLYHQLQAIAPYASQPVIRPIEGSKALIKQVLDIGAQTLLIPMVDTAEQARQVVSATRYPPLGQRGVGASVARAARWGRIDNYMAQANESLCLLVQVESKVALENLDAILEVEGIDGVFIGPADLSASLGYPDNAGHPEVQRIIEACIYRIRAAGKAAGFLAVDPAMAQKCLAWGANFVAVGVDTMLYTEALDNRLVMFKSVQSVSTAKRSY</sequence>
<dbReference type="EC" id="4.1.2.53" evidence="1"/>
<dbReference type="EMBL" id="CP000026">
    <property type="protein sequence ID" value="AAV76576.1"/>
    <property type="molecule type" value="Genomic_DNA"/>
</dbReference>
<dbReference type="SMR" id="Q5PI50"/>
<dbReference type="KEGG" id="spt:SPA0574"/>
<dbReference type="HOGENOM" id="CLU_059964_1_0_6"/>
<dbReference type="Proteomes" id="UP000008185">
    <property type="component" value="Chromosome"/>
</dbReference>
<dbReference type="GO" id="GO:0005737">
    <property type="term" value="C:cytoplasm"/>
    <property type="evidence" value="ECO:0007669"/>
    <property type="project" value="TreeGrafter"/>
</dbReference>
<dbReference type="GO" id="GO:0106099">
    <property type="term" value="F:2-keto-3-deoxy-L-rhamnonate aldolase activity"/>
    <property type="evidence" value="ECO:0007669"/>
    <property type="project" value="UniProtKB-EC"/>
</dbReference>
<dbReference type="GO" id="GO:0000287">
    <property type="term" value="F:magnesium ion binding"/>
    <property type="evidence" value="ECO:0007669"/>
    <property type="project" value="UniProtKB-UniRule"/>
</dbReference>
<dbReference type="FunFam" id="3.20.20.60:FF:000004">
    <property type="entry name" value="5-keto-4-deoxy-D-glucarate aldolase"/>
    <property type="match status" value="1"/>
</dbReference>
<dbReference type="Gene3D" id="3.20.20.60">
    <property type="entry name" value="Phosphoenolpyruvate-binding domains"/>
    <property type="match status" value="1"/>
</dbReference>
<dbReference type="HAMAP" id="MF_01290">
    <property type="entry name" value="KDR_aldolase"/>
    <property type="match status" value="1"/>
</dbReference>
<dbReference type="InterPro" id="IPR005000">
    <property type="entry name" value="Aldolase/citrate-lyase_domain"/>
</dbReference>
<dbReference type="InterPro" id="IPR050251">
    <property type="entry name" value="HpcH-HpaI_aldolase"/>
</dbReference>
<dbReference type="InterPro" id="IPR023593">
    <property type="entry name" value="KDR_aldolase"/>
</dbReference>
<dbReference type="InterPro" id="IPR015813">
    <property type="entry name" value="Pyrv/PenolPyrv_kinase-like_dom"/>
</dbReference>
<dbReference type="InterPro" id="IPR040442">
    <property type="entry name" value="Pyrv_kinase-like_dom_sf"/>
</dbReference>
<dbReference type="NCBIfam" id="NF007521">
    <property type="entry name" value="PRK10128.1"/>
    <property type="match status" value="1"/>
</dbReference>
<dbReference type="PANTHER" id="PTHR30502">
    <property type="entry name" value="2-KETO-3-DEOXY-L-RHAMNONATE ALDOLASE"/>
    <property type="match status" value="1"/>
</dbReference>
<dbReference type="PANTHER" id="PTHR30502:SF5">
    <property type="entry name" value="2-KETO-3-DEOXY-L-RHAMNONATE ALDOLASE"/>
    <property type="match status" value="1"/>
</dbReference>
<dbReference type="Pfam" id="PF03328">
    <property type="entry name" value="HpcH_HpaI"/>
    <property type="match status" value="1"/>
</dbReference>
<dbReference type="SUPFAM" id="SSF51621">
    <property type="entry name" value="Phosphoenolpyruvate/pyruvate domain"/>
    <property type="match status" value="1"/>
</dbReference>
<comment type="function">
    <text evidence="1">Catalyzes the reversible retro-aldol cleavage of 2-keto-3-deoxy-L-rhamnonate (KDR) to pyruvate and lactaldehyde.</text>
</comment>
<comment type="catalytic activity">
    <reaction evidence="1">
        <text>2-dehydro-3-deoxy-L-rhamnonate = (S)-lactaldehyde + pyruvate</text>
        <dbReference type="Rhea" id="RHEA:25784"/>
        <dbReference type="ChEBI" id="CHEBI:15361"/>
        <dbReference type="ChEBI" id="CHEBI:18041"/>
        <dbReference type="ChEBI" id="CHEBI:58371"/>
        <dbReference type="EC" id="4.1.2.53"/>
    </reaction>
</comment>
<comment type="cofactor">
    <cofactor evidence="1">
        <name>Mg(2+)</name>
        <dbReference type="ChEBI" id="CHEBI:18420"/>
    </cofactor>
    <text evidence="1">Binds 1 Mg(2+) ion per subunit.</text>
</comment>
<comment type="subunit">
    <text evidence="1">Homohexamer.</text>
</comment>
<comment type="similarity">
    <text evidence="1">Belongs to the HpcH/HpaI aldolase family. KDR aldolase subfamily.</text>
</comment>
<feature type="chain" id="PRO_0000353174" description="2-keto-3-deoxy-L-rhamnonate aldolase">
    <location>
        <begin position="1"/>
        <end position="267"/>
    </location>
</feature>
<feature type="active site" description="Proton acceptor" evidence="1">
    <location>
        <position position="49"/>
    </location>
</feature>
<feature type="binding site" evidence="1">
    <location>
        <position position="151"/>
    </location>
    <ligand>
        <name>substrate</name>
    </ligand>
</feature>
<feature type="binding site" evidence="1">
    <location>
        <position position="153"/>
    </location>
    <ligand>
        <name>Mg(2+)</name>
        <dbReference type="ChEBI" id="CHEBI:18420"/>
    </ligand>
</feature>
<feature type="binding site" evidence="1">
    <location>
        <position position="178"/>
    </location>
    <ligand>
        <name>substrate</name>
    </ligand>
</feature>
<feature type="binding site" evidence="1">
    <location>
        <position position="179"/>
    </location>
    <ligand>
        <name>Mg(2+)</name>
        <dbReference type="ChEBI" id="CHEBI:18420"/>
    </ligand>
</feature>
<feature type="binding site" evidence="1">
    <location>
        <position position="179"/>
    </location>
    <ligand>
        <name>substrate</name>
    </ligand>
</feature>
<feature type="site" description="Transition state stabilizer" evidence="1">
    <location>
        <position position="74"/>
    </location>
</feature>
<feature type="site" description="Increases basicity of active site His" evidence="1">
    <location>
        <position position="88"/>
    </location>
</feature>
<gene>
    <name evidence="1" type="primary">rhmA</name>
    <name type="ordered locus">SPA0574</name>
</gene>
<protein>
    <recommendedName>
        <fullName evidence="1">2-keto-3-deoxy-L-rhamnonate aldolase</fullName>
        <shortName evidence="1">KDR aldolase</shortName>
        <ecNumber evidence="1">4.1.2.53</ecNumber>
    </recommendedName>
    <alternativeName>
        <fullName evidence="1">2-dehydro-3-deoxyrhamnonate aldolase</fullName>
    </alternativeName>
</protein>
<name>RHMA_SALPA</name>
<keyword id="KW-0456">Lyase</keyword>
<keyword id="KW-0460">Magnesium</keyword>
<keyword id="KW-0479">Metal-binding</keyword>
<accession>Q5PI50</accession>
<reference key="1">
    <citation type="journal article" date="2004" name="Nat. Genet.">
        <title>Comparison of genome degradation in Paratyphi A and Typhi, human-restricted serovars of Salmonella enterica that cause typhoid.</title>
        <authorList>
            <person name="McClelland M."/>
            <person name="Sanderson K.E."/>
            <person name="Clifton S.W."/>
            <person name="Latreille P."/>
            <person name="Porwollik S."/>
            <person name="Sabo A."/>
            <person name="Meyer R."/>
            <person name="Bieri T."/>
            <person name="Ozersky P."/>
            <person name="McLellan M."/>
            <person name="Harkins C.R."/>
            <person name="Wang C."/>
            <person name="Nguyen C."/>
            <person name="Berghoff A."/>
            <person name="Elliott G."/>
            <person name="Kohlberg S."/>
            <person name="Strong C."/>
            <person name="Du F."/>
            <person name="Carter J."/>
            <person name="Kremizki C."/>
            <person name="Layman D."/>
            <person name="Leonard S."/>
            <person name="Sun H."/>
            <person name="Fulton L."/>
            <person name="Nash W."/>
            <person name="Miner T."/>
            <person name="Minx P."/>
            <person name="Delehaunty K."/>
            <person name="Fronick C."/>
            <person name="Magrini V."/>
            <person name="Nhan M."/>
            <person name="Warren W."/>
            <person name="Florea L."/>
            <person name="Spieth J."/>
            <person name="Wilson R.K."/>
        </authorList>
    </citation>
    <scope>NUCLEOTIDE SEQUENCE [LARGE SCALE GENOMIC DNA]</scope>
    <source>
        <strain>ATCC 9150 / SARB42</strain>
    </source>
</reference>
<organism>
    <name type="scientific">Salmonella paratyphi A (strain ATCC 9150 / SARB42)</name>
    <dbReference type="NCBI Taxonomy" id="295319"/>
    <lineage>
        <taxon>Bacteria</taxon>
        <taxon>Pseudomonadati</taxon>
        <taxon>Pseudomonadota</taxon>
        <taxon>Gammaproteobacteria</taxon>
        <taxon>Enterobacterales</taxon>
        <taxon>Enterobacteriaceae</taxon>
        <taxon>Salmonella</taxon>
    </lineage>
</organism>
<evidence type="ECO:0000255" key="1">
    <source>
        <dbReference type="HAMAP-Rule" id="MF_01290"/>
    </source>
</evidence>
<proteinExistence type="inferred from homology"/>